<dbReference type="EC" id="3.5.2.9" evidence="1"/>
<dbReference type="EMBL" id="FM200053">
    <property type="protein sequence ID" value="CAR60087.1"/>
    <property type="molecule type" value="Genomic_DNA"/>
</dbReference>
<dbReference type="RefSeq" id="WP_001017915.1">
    <property type="nucleotide sequence ID" value="NC_011147.1"/>
</dbReference>
<dbReference type="SMR" id="B5BC95"/>
<dbReference type="KEGG" id="sek:SSPA1888"/>
<dbReference type="HOGENOM" id="CLU_069535_0_0_6"/>
<dbReference type="Proteomes" id="UP000001869">
    <property type="component" value="Chromosome"/>
</dbReference>
<dbReference type="GO" id="GO:0017168">
    <property type="term" value="F:5-oxoprolinase (ATP-hydrolyzing) activity"/>
    <property type="evidence" value="ECO:0007669"/>
    <property type="project" value="UniProtKB-UniRule"/>
</dbReference>
<dbReference type="GO" id="GO:0005524">
    <property type="term" value="F:ATP binding"/>
    <property type="evidence" value="ECO:0007669"/>
    <property type="project" value="UniProtKB-UniRule"/>
</dbReference>
<dbReference type="GO" id="GO:0005975">
    <property type="term" value="P:carbohydrate metabolic process"/>
    <property type="evidence" value="ECO:0007669"/>
    <property type="project" value="InterPro"/>
</dbReference>
<dbReference type="CDD" id="cd10800">
    <property type="entry name" value="LamB_YcsF_YbgL_like"/>
    <property type="match status" value="1"/>
</dbReference>
<dbReference type="Gene3D" id="3.20.20.370">
    <property type="entry name" value="Glycoside hydrolase/deacetylase"/>
    <property type="match status" value="1"/>
</dbReference>
<dbReference type="HAMAP" id="MF_00691">
    <property type="entry name" value="PxpA"/>
    <property type="match status" value="1"/>
</dbReference>
<dbReference type="InterPro" id="IPR011330">
    <property type="entry name" value="Glyco_hydro/deAcase_b/a-brl"/>
</dbReference>
<dbReference type="InterPro" id="IPR005501">
    <property type="entry name" value="LamB/YcsF/PxpA-like"/>
</dbReference>
<dbReference type="NCBIfam" id="NF003812">
    <property type="entry name" value="PRK05406.1-1"/>
    <property type="match status" value="1"/>
</dbReference>
<dbReference type="NCBIfam" id="NF003814">
    <property type="entry name" value="PRK05406.1-3"/>
    <property type="match status" value="1"/>
</dbReference>
<dbReference type="NCBIfam" id="NF003815">
    <property type="entry name" value="PRK05406.1-4"/>
    <property type="match status" value="1"/>
</dbReference>
<dbReference type="NCBIfam" id="NF003816">
    <property type="entry name" value="PRK05406.1-5"/>
    <property type="match status" value="1"/>
</dbReference>
<dbReference type="PANTHER" id="PTHR30292:SF0">
    <property type="entry name" value="5-OXOPROLINASE SUBUNIT A"/>
    <property type="match status" value="1"/>
</dbReference>
<dbReference type="PANTHER" id="PTHR30292">
    <property type="entry name" value="UNCHARACTERIZED PROTEIN YBGL-RELATED"/>
    <property type="match status" value="1"/>
</dbReference>
<dbReference type="Pfam" id="PF03746">
    <property type="entry name" value="LamB_YcsF"/>
    <property type="match status" value="1"/>
</dbReference>
<dbReference type="SUPFAM" id="SSF88713">
    <property type="entry name" value="Glycoside hydrolase/deacetylase"/>
    <property type="match status" value="1"/>
</dbReference>
<keyword id="KW-0067">ATP-binding</keyword>
<keyword id="KW-0378">Hydrolase</keyword>
<keyword id="KW-0547">Nucleotide-binding</keyword>
<name>PXPA_SALPK</name>
<accession>B5BC95</accession>
<comment type="function">
    <text evidence="1">Catalyzes the cleavage of 5-oxoproline to form L-glutamate coupled to the hydrolysis of ATP to ADP and inorganic phosphate.</text>
</comment>
<comment type="catalytic activity">
    <reaction evidence="1">
        <text>5-oxo-L-proline + ATP + 2 H2O = L-glutamate + ADP + phosphate + H(+)</text>
        <dbReference type="Rhea" id="RHEA:10348"/>
        <dbReference type="ChEBI" id="CHEBI:15377"/>
        <dbReference type="ChEBI" id="CHEBI:15378"/>
        <dbReference type="ChEBI" id="CHEBI:29985"/>
        <dbReference type="ChEBI" id="CHEBI:30616"/>
        <dbReference type="ChEBI" id="CHEBI:43474"/>
        <dbReference type="ChEBI" id="CHEBI:58402"/>
        <dbReference type="ChEBI" id="CHEBI:456216"/>
        <dbReference type="EC" id="3.5.2.9"/>
    </reaction>
</comment>
<comment type="subunit">
    <text evidence="1">Forms a complex composed of PxpA, PxpB and PxpC.</text>
</comment>
<comment type="similarity">
    <text evidence="1">Belongs to the LamB/PxpA family.</text>
</comment>
<gene>
    <name evidence="1" type="primary">pxpA</name>
    <name type="ordered locus">SSPA1888</name>
</gene>
<proteinExistence type="inferred from homology"/>
<protein>
    <recommendedName>
        <fullName evidence="1">5-oxoprolinase subunit A</fullName>
        <shortName evidence="1">5-OPase subunit A</shortName>
        <ecNumber evidence="1">3.5.2.9</ecNumber>
    </recommendedName>
    <alternativeName>
        <fullName evidence="1">5-oxoprolinase (ATP-hydrolyzing) subunit A</fullName>
    </alternativeName>
</protein>
<feature type="chain" id="PRO_1000132074" description="5-oxoprolinase subunit A">
    <location>
        <begin position="1"/>
        <end position="244"/>
    </location>
</feature>
<organism>
    <name type="scientific">Salmonella paratyphi A (strain AKU_12601)</name>
    <dbReference type="NCBI Taxonomy" id="554290"/>
    <lineage>
        <taxon>Bacteria</taxon>
        <taxon>Pseudomonadati</taxon>
        <taxon>Pseudomonadota</taxon>
        <taxon>Gammaproteobacteria</taxon>
        <taxon>Enterobacterales</taxon>
        <taxon>Enterobacteriaceae</taxon>
        <taxon>Salmonella</taxon>
    </lineage>
</organism>
<reference key="1">
    <citation type="journal article" date="2009" name="BMC Genomics">
        <title>Pseudogene accumulation in the evolutionary histories of Salmonella enterica serovars Paratyphi A and Typhi.</title>
        <authorList>
            <person name="Holt K.E."/>
            <person name="Thomson N.R."/>
            <person name="Wain J."/>
            <person name="Langridge G.C."/>
            <person name="Hasan R."/>
            <person name="Bhutta Z.A."/>
            <person name="Quail M.A."/>
            <person name="Norbertczak H."/>
            <person name="Walker D."/>
            <person name="Simmonds M."/>
            <person name="White B."/>
            <person name="Bason N."/>
            <person name="Mungall K."/>
            <person name="Dougan G."/>
            <person name="Parkhill J."/>
        </authorList>
    </citation>
    <scope>NUCLEOTIDE SEQUENCE [LARGE SCALE GENOMIC DNA]</scope>
    <source>
        <strain>AKU_12601</strain>
    </source>
</reference>
<sequence>MNIDLNADLGEGCASDSELLTLVSSANIASGFHAGDAQTMLTCVREALKNGVAIGAHPSFPDRDNFGRTAMVLPPETVYAQTLYQIGALGAIVQAQGGVMRHVKPHGMLYNQAAKDPRLAQAIAKAVHDYDPSLILVGLAGSELIRAGERCRLVTRQEVFADRGYQADGSLVPRMQPGALIHDEEQALAQTLDMVQAGRVKSVTGVWTTVTAQTVCIHGDGEYALAFARRLRAAFNARNIHVIA</sequence>
<evidence type="ECO:0000255" key="1">
    <source>
        <dbReference type="HAMAP-Rule" id="MF_00691"/>
    </source>
</evidence>